<reference key="1">
    <citation type="journal article" date="1992" name="J. Bacteriol.">
        <title>Cloning, nucleotide sequences, and enzymatic properties of glucose dehydrogenase isozymes from Bacillus megaterium IAM1030.</title>
        <authorList>
            <person name="Nagao T."/>
            <person name="Mitamura T."/>
            <person name="Wang X.H."/>
            <person name="Negoro S."/>
            <person name="Yomo T."/>
            <person name="Urabe I."/>
            <person name="Okada H."/>
        </authorList>
    </citation>
    <scope>NUCLEOTIDE SEQUENCE [GENOMIC DNA]</scope>
    <source>
        <strain>IAM 1030 / JCM 20016</strain>
    </source>
</reference>
<keyword id="KW-0520">NAD</keyword>
<keyword id="KW-0560">Oxidoreductase</keyword>
<evidence type="ECO:0000250" key="1"/>
<evidence type="ECO:0000255" key="2">
    <source>
        <dbReference type="PROSITE-ProRule" id="PRU10001"/>
    </source>
</evidence>
<evidence type="ECO:0000305" key="3"/>
<dbReference type="EC" id="1.1.1.47"/>
<dbReference type="EMBL" id="D10625">
    <property type="protein sequence ID" value="BAA01475.1"/>
    <property type="molecule type" value="Genomic_DNA"/>
</dbReference>
<dbReference type="PIR" id="I40224">
    <property type="entry name" value="I40224"/>
</dbReference>
<dbReference type="SMR" id="P39484"/>
<dbReference type="SABIO-RK" id="P39484"/>
<dbReference type="GO" id="GO:0047934">
    <property type="term" value="F:glucose 1-dehydrogenase (NAD+) activity"/>
    <property type="evidence" value="ECO:0007669"/>
    <property type="project" value="RHEA"/>
</dbReference>
<dbReference type="GO" id="GO:0047935">
    <property type="term" value="F:glucose 1-dehydrogenase (NADP+) activity"/>
    <property type="evidence" value="ECO:0007669"/>
    <property type="project" value="RHEA"/>
</dbReference>
<dbReference type="GO" id="GO:0006629">
    <property type="term" value="P:lipid metabolic process"/>
    <property type="evidence" value="ECO:0007669"/>
    <property type="project" value="UniProtKB-ARBA"/>
</dbReference>
<dbReference type="GO" id="GO:0032787">
    <property type="term" value="P:monocarboxylic acid metabolic process"/>
    <property type="evidence" value="ECO:0007669"/>
    <property type="project" value="UniProtKB-ARBA"/>
</dbReference>
<dbReference type="CDD" id="cd05358">
    <property type="entry name" value="GlcDH_SDR_c"/>
    <property type="match status" value="1"/>
</dbReference>
<dbReference type="FunFam" id="3.40.50.720:FF:000248">
    <property type="entry name" value="Glucose 1-dehydrogenase"/>
    <property type="match status" value="1"/>
</dbReference>
<dbReference type="Gene3D" id="3.40.50.720">
    <property type="entry name" value="NAD(P)-binding Rossmann-like Domain"/>
    <property type="match status" value="1"/>
</dbReference>
<dbReference type="InterPro" id="IPR036291">
    <property type="entry name" value="NAD(P)-bd_dom_sf"/>
</dbReference>
<dbReference type="InterPro" id="IPR020904">
    <property type="entry name" value="Sc_DH/Rdtase_CS"/>
</dbReference>
<dbReference type="InterPro" id="IPR050259">
    <property type="entry name" value="SDR"/>
</dbReference>
<dbReference type="InterPro" id="IPR002347">
    <property type="entry name" value="SDR_fam"/>
</dbReference>
<dbReference type="NCBIfam" id="NF005559">
    <property type="entry name" value="PRK07231.1"/>
    <property type="match status" value="1"/>
</dbReference>
<dbReference type="NCBIfam" id="NF006493">
    <property type="entry name" value="PRK08936.1"/>
    <property type="match status" value="1"/>
</dbReference>
<dbReference type="PANTHER" id="PTHR42879">
    <property type="entry name" value="3-OXOACYL-(ACYL-CARRIER-PROTEIN) REDUCTASE"/>
    <property type="match status" value="1"/>
</dbReference>
<dbReference type="PANTHER" id="PTHR42879:SF2">
    <property type="entry name" value="3-OXOACYL-[ACYL-CARRIER-PROTEIN] REDUCTASE FABG"/>
    <property type="match status" value="1"/>
</dbReference>
<dbReference type="Pfam" id="PF13561">
    <property type="entry name" value="adh_short_C2"/>
    <property type="match status" value="1"/>
</dbReference>
<dbReference type="PRINTS" id="PR00081">
    <property type="entry name" value="GDHRDH"/>
</dbReference>
<dbReference type="PRINTS" id="PR00080">
    <property type="entry name" value="SDRFAMILY"/>
</dbReference>
<dbReference type="SUPFAM" id="SSF51735">
    <property type="entry name" value="NAD(P)-binding Rossmann-fold domains"/>
    <property type="match status" value="1"/>
</dbReference>
<dbReference type="PROSITE" id="PS00061">
    <property type="entry name" value="ADH_SHORT"/>
    <property type="match status" value="1"/>
</dbReference>
<protein>
    <recommendedName>
        <fullName>Glucose 1-dehydrogenase 3</fullName>
        <ecNumber>1.1.1.47</ecNumber>
    </recommendedName>
    <alternativeName>
        <fullName>GLCDH-III</fullName>
    </alternativeName>
</protein>
<organism>
    <name type="scientific">Priestia megaterium</name>
    <name type="common">Bacillus megaterium</name>
    <dbReference type="NCBI Taxonomy" id="1404"/>
    <lineage>
        <taxon>Bacteria</taxon>
        <taxon>Bacillati</taxon>
        <taxon>Bacillota</taxon>
        <taxon>Bacilli</taxon>
        <taxon>Bacillales</taxon>
        <taxon>Bacillaceae</taxon>
        <taxon>Priestia</taxon>
    </lineage>
</organism>
<feature type="chain" id="PRO_0000054611" description="Glucose 1-dehydrogenase 3">
    <location>
        <begin position="1"/>
        <end position="261"/>
    </location>
</feature>
<feature type="active site" description="Proton acceptor" evidence="2">
    <location>
        <position position="158"/>
    </location>
</feature>
<feature type="binding site" evidence="1">
    <location>
        <begin position="11"/>
        <end position="35"/>
    </location>
    <ligand>
        <name>NAD(+)</name>
        <dbReference type="ChEBI" id="CHEBI:57540"/>
    </ligand>
</feature>
<feature type="binding site" evidence="1">
    <location>
        <position position="145"/>
    </location>
    <ligand>
        <name>substrate</name>
    </ligand>
</feature>
<accession>P39484</accession>
<comment type="catalytic activity">
    <reaction>
        <text>D-glucose + NAD(+) = D-glucono-1,5-lactone + NADH + H(+)</text>
        <dbReference type="Rhea" id="RHEA:14293"/>
        <dbReference type="ChEBI" id="CHEBI:4167"/>
        <dbReference type="ChEBI" id="CHEBI:15378"/>
        <dbReference type="ChEBI" id="CHEBI:16217"/>
        <dbReference type="ChEBI" id="CHEBI:57540"/>
        <dbReference type="ChEBI" id="CHEBI:57945"/>
        <dbReference type="EC" id="1.1.1.47"/>
    </reaction>
</comment>
<comment type="catalytic activity">
    <reaction>
        <text>D-glucose + NADP(+) = D-glucono-1,5-lactone + NADPH + H(+)</text>
        <dbReference type="Rhea" id="RHEA:14405"/>
        <dbReference type="ChEBI" id="CHEBI:4167"/>
        <dbReference type="ChEBI" id="CHEBI:15378"/>
        <dbReference type="ChEBI" id="CHEBI:16217"/>
        <dbReference type="ChEBI" id="CHEBI:57783"/>
        <dbReference type="ChEBI" id="CHEBI:58349"/>
        <dbReference type="EC" id="1.1.1.47"/>
    </reaction>
</comment>
<comment type="subunit">
    <text>Homotetramer.</text>
</comment>
<comment type="miscellaneous">
    <text>Prefers NAD to NADP; very unstable compared to the other isoenzymes and 2M NaCl enhances its pH and thermostability.</text>
</comment>
<comment type="similarity">
    <text evidence="3">Belongs to the short-chain dehydrogenases/reductases (SDR) family.</text>
</comment>
<gene>
    <name type="primary">gdhIII</name>
</gene>
<sequence>MYTDLKDKVVVITGGSTGLGRAMAVRFGQEEAKVVINYYNNEEEALDAKKEVEEAGGQAIIVQGDVTKEEDVVNLVQTAIKEFGTLDVMINNAGVENPVPSHELSLDNWNKVIDTNLTGAFLGSREAIKYFVENDIKGNVINMSSVHEMIPWPLFVHYAASKGGMKQMTETLALEYAPKGIRVNNIGPGAMNTPINAEKFADPVQRADVESMIPMGYIGKPEEVAAVAAFLASSQASYVTGITLFADGGMTKYPSFQTGRG</sequence>
<name>DHG3_PRIMG</name>
<proteinExistence type="inferred from homology"/>